<accession>G3MYZ3</accession>
<keyword id="KW-0903">Direct protein sequencing</keyword>
<keyword id="KW-1015">Disulfide bond</keyword>
<keyword id="KW-0325">Glycoprotein</keyword>
<keyword id="KW-0653">Protein transport</keyword>
<keyword id="KW-1185">Reference proteome</keyword>
<keyword id="KW-0677">Repeat</keyword>
<keyword id="KW-0964">Secreted</keyword>
<keyword id="KW-0732">Signal</keyword>
<keyword id="KW-0813">Transport</keyword>
<name>AFAM_BOVIN</name>
<protein>
    <recommendedName>
        <fullName evidence="5">Afamin</fullName>
    </recommendedName>
    <alternativeName>
        <fullName evidence="5">Alpha-albumin</fullName>
    </alternativeName>
</protein>
<feature type="signal peptide" evidence="4">
    <location>
        <begin position="1"/>
        <end position="21"/>
    </location>
</feature>
<feature type="chain" id="PRO_5003447762" description="Afamin">
    <location>
        <begin position="22"/>
        <end position="604"/>
    </location>
</feature>
<feature type="domain" description="Albumin 1" evidence="3">
    <location>
        <begin position="22"/>
        <end position="210"/>
    </location>
</feature>
<feature type="domain" description="Albumin 2" evidence="3">
    <location>
        <begin position="211"/>
        <end position="403"/>
    </location>
</feature>
<feature type="domain" description="Albumin 3" evidence="3">
    <location>
        <begin position="404"/>
        <end position="598"/>
    </location>
</feature>
<feature type="region of interest" description="Binding pocket for hydrophobic ligands" evidence="1">
    <location>
        <begin position="215"/>
        <end position="319"/>
    </location>
</feature>
<feature type="glycosylation site" description="N-linked (GlcNAc...) asparagine" evidence="2">
    <location>
        <position position="109"/>
    </location>
</feature>
<feature type="glycosylation site" description="N-linked (GlcNAc...) asparagine" evidence="2">
    <location>
        <position position="434"/>
    </location>
</feature>
<feature type="disulfide bond" evidence="3">
    <location>
        <begin position="77"/>
        <end position="86"/>
    </location>
</feature>
<feature type="disulfide bond" evidence="3">
    <location>
        <begin position="99"/>
        <end position="114"/>
    </location>
</feature>
<feature type="disulfide bond" evidence="3">
    <location>
        <begin position="113"/>
        <end position="124"/>
    </location>
</feature>
<feature type="disulfide bond" evidence="3">
    <location>
        <begin position="148"/>
        <end position="193"/>
    </location>
</feature>
<feature type="disulfide bond" evidence="3">
    <location>
        <begin position="192"/>
        <end position="201"/>
    </location>
</feature>
<feature type="disulfide bond" evidence="3">
    <location>
        <begin position="224"/>
        <end position="270"/>
    </location>
</feature>
<feature type="disulfide bond" evidence="3">
    <location>
        <begin position="269"/>
        <end position="277"/>
    </location>
</feature>
<feature type="disulfide bond" evidence="3">
    <location>
        <begin position="289"/>
        <end position="303"/>
    </location>
</feature>
<feature type="disulfide bond" evidence="3">
    <location>
        <begin position="302"/>
        <end position="313"/>
    </location>
</feature>
<feature type="disulfide bond" evidence="3">
    <location>
        <begin position="340"/>
        <end position="385"/>
    </location>
</feature>
<feature type="disulfide bond" evidence="3">
    <location>
        <begin position="384"/>
        <end position="393"/>
    </location>
</feature>
<feature type="disulfide bond" evidence="3">
    <location>
        <begin position="416"/>
        <end position="462"/>
    </location>
</feature>
<feature type="disulfide bond" evidence="3">
    <location>
        <begin position="461"/>
        <end position="470"/>
    </location>
</feature>
<feature type="disulfide bond" evidence="3">
    <location>
        <begin position="483"/>
        <end position="499"/>
    </location>
</feature>
<feature type="disulfide bond" evidence="3">
    <location>
        <begin position="498"/>
        <end position="509"/>
    </location>
</feature>
<feature type="disulfide bond" evidence="3">
    <location>
        <begin position="536"/>
        <end position="581"/>
    </location>
</feature>
<feature type="disulfide bond" evidence="3">
    <location>
        <begin position="580"/>
        <end position="589"/>
    </location>
</feature>
<comment type="function">
    <text evidence="1 4">Functions as a carrier for hydrophobic molecules in body fluids. Essential for the solubility and activity of lipidated Wnt family members, including WNT1, WNT2B, WNT3, WNT3A, WNT5A, WNT7A, WNT7B, WNT8, WNT9A, WNT9B, WNT10A and WNT10B (PubMed:26902720). Binds vitamin E. May transport vitamin E in body fluids under conditions where the lipoprotein system is not sufficient. May be involved in the transport of vitamin E across the blood-brain barrier (By similarity).</text>
</comment>
<comment type="subunit">
    <text evidence="1 4">Forms a 1:1 complex with Wnt family members; interacts with WNT3A and WNT5A (PubMed:26902720). Interacts with WNT1, WNT2B, WNT3, WNT7A, WNT7B, WNT8, WNT9A, WNT9B, WNT10A and WNT10B (By similarity).</text>
</comment>
<comment type="interaction">
    <interactant intactId="EBI-22052138">
        <id>G3MYZ3</id>
    </interactant>
    <interactant intactId="EBI-2899665">
        <id>P27467</id>
        <label>Wnt3a</label>
    </interactant>
    <organismsDiffer>true</organismsDiffer>
    <experiments>3</experiments>
</comment>
<comment type="subcellular location">
    <subcellularLocation>
        <location evidence="1">Secreted</location>
    </subcellularLocation>
</comment>
<comment type="domain">
    <text evidence="1">The second albumin domain forms a deep binding pocket that contains palmitoleic acid (in vitro). Palmitoleic acid is most likely not the physiological ligand. Instead, this pocket may accomodate the covalently bound lipid moiety of Wnt family members.</text>
</comment>
<comment type="PTM">
    <text evidence="1">N-glycosylated; more than 90% of the glycans are sialylated.</text>
</comment>
<comment type="similarity">
    <text evidence="3">Belongs to the ALB/AFP/VDB family.</text>
</comment>
<gene>
    <name type="primary">AFM</name>
</gene>
<evidence type="ECO:0000250" key="1">
    <source>
        <dbReference type="UniProtKB" id="P43652"/>
    </source>
</evidence>
<evidence type="ECO:0000255" key="2"/>
<evidence type="ECO:0000255" key="3">
    <source>
        <dbReference type="PROSITE-ProRule" id="PRU00769"/>
    </source>
</evidence>
<evidence type="ECO:0000269" key="4">
    <source>
    </source>
</evidence>
<evidence type="ECO:0000303" key="5">
    <source>
    </source>
</evidence>
<evidence type="ECO:0000312" key="6">
    <source>
        <dbReference type="Proteomes" id="UP000009136"/>
    </source>
</evidence>
<dbReference type="EMBL" id="DAAA02018076">
    <property type="status" value="NOT_ANNOTATED_CDS"/>
    <property type="molecule type" value="Genomic_DNA"/>
</dbReference>
<dbReference type="RefSeq" id="NP_001179104.1">
    <property type="nucleotide sequence ID" value="NM_001192175.1"/>
</dbReference>
<dbReference type="RefSeq" id="XP_015327164.1">
    <property type="nucleotide sequence ID" value="XM_015471678.3"/>
</dbReference>
<dbReference type="SMR" id="G3MYZ3"/>
<dbReference type="FunCoup" id="G3MYZ3">
    <property type="interactions" value="167"/>
</dbReference>
<dbReference type="IntAct" id="G3MYZ3">
    <property type="interactions" value="1"/>
</dbReference>
<dbReference type="STRING" id="9913.ENSBTAP00000054782"/>
<dbReference type="GlyCosmos" id="G3MYZ3">
    <property type="glycosylation" value="2 sites, No reported glycans"/>
</dbReference>
<dbReference type="GlyGen" id="G3MYZ3">
    <property type="glycosylation" value="2 sites"/>
</dbReference>
<dbReference type="PaxDb" id="9913-ENSBTAP00000054782"/>
<dbReference type="GeneID" id="508264"/>
<dbReference type="KEGG" id="bta:508264"/>
<dbReference type="CTD" id="173"/>
<dbReference type="VEuPathDB" id="HostDB:ENSBTAG00000047833"/>
<dbReference type="eggNOG" id="ENOG502R7EA">
    <property type="taxonomic scope" value="Eukaryota"/>
</dbReference>
<dbReference type="HOGENOM" id="CLU_030161_2_0_1"/>
<dbReference type="InParanoid" id="G3MYZ3"/>
<dbReference type="OMA" id="KECCHTE"/>
<dbReference type="OrthoDB" id="9875082at2759"/>
<dbReference type="TreeFam" id="TF335561"/>
<dbReference type="Proteomes" id="UP000009136">
    <property type="component" value="Chromosome 6"/>
</dbReference>
<dbReference type="Bgee" id="ENSBTAG00000047833">
    <property type="expression patterns" value="Expressed in liver and 19 other cell types or tissues"/>
</dbReference>
<dbReference type="GO" id="GO:0005737">
    <property type="term" value="C:cytoplasm"/>
    <property type="evidence" value="ECO:0000318"/>
    <property type="project" value="GO_Central"/>
</dbReference>
<dbReference type="GO" id="GO:0005615">
    <property type="term" value="C:extracellular space"/>
    <property type="evidence" value="ECO:0000250"/>
    <property type="project" value="UniProtKB"/>
</dbReference>
<dbReference type="GO" id="GO:0008431">
    <property type="term" value="F:vitamin E binding"/>
    <property type="evidence" value="ECO:0000318"/>
    <property type="project" value="GO_Central"/>
</dbReference>
<dbReference type="GO" id="GO:0050821">
    <property type="term" value="P:protein stabilization"/>
    <property type="evidence" value="ECO:0000314"/>
    <property type="project" value="UniProtKB"/>
</dbReference>
<dbReference type="GO" id="GO:0071693">
    <property type="term" value="P:protein transport within extracellular region"/>
    <property type="evidence" value="ECO:0000250"/>
    <property type="project" value="UniProtKB"/>
</dbReference>
<dbReference type="GO" id="GO:0051180">
    <property type="term" value="P:vitamin transport"/>
    <property type="evidence" value="ECO:0000318"/>
    <property type="project" value="GO_Central"/>
</dbReference>
<dbReference type="CDD" id="cd00015">
    <property type="entry name" value="ALBUMIN"/>
    <property type="match status" value="3"/>
</dbReference>
<dbReference type="FunFam" id="1.10.246.10:FF:000001">
    <property type="entry name" value="Serum albumin"/>
    <property type="match status" value="2"/>
</dbReference>
<dbReference type="FunFam" id="1.10.246.10:FF:000002">
    <property type="entry name" value="Serum albumin"/>
    <property type="match status" value="2"/>
</dbReference>
<dbReference type="FunFam" id="1.10.246.10:FF:000004">
    <property type="entry name" value="Serum albumin"/>
    <property type="match status" value="1"/>
</dbReference>
<dbReference type="Gene3D" id="1.10.246.10">
    <property type="match status" value="6"/>
</dbReference>
<dbReference type="InterPro" id="IPR000264">
    <property type="entry name" value="ALB/AFP/VDB"/>
</dbReference>
<dbReference type="InterPro" id="IPR020858">
    <property type="entry name" value="Serum_albumin-like"/>
</dbReference>
<dbReference type="InterPro" id="IPR021177">
    <property type="entry name" value="Serum_albumin/AFP/Afamin"/>
</dbReference>
<dbReference type="InterPro" id="IPR020857">
    <property type="entry name" value="Serum_albumin_CS"/>
</dbReference>
<dbReference type="InterPro" id="IPR014760">
    <property type="entry name" value="Serum_albumin_N"/>
</dbReference>
<dbReference type="PANTHER" id="PTHR11385:SF14">
    <property type="entry name" value="AFAMIN"/>
    <property type="match status" value="1"/>
</dbReference>
<dbReference type="PANTHER" id="PTHR11385">
    <property type="entry name" value="SERUM ALBUMIN-RELATED"/>
    <property type="match status" value="1"/>
</dbReference>
<dbReference type="Pfam" id="PF00273">
    <property type="entry name" value="Serum_albumin"/>
    <property type="match status" value="3"/>
</dbReference>
<dbReference type="PIRSF" id="PIRSF002520">
    <property type="entry name" value="Serum_albumin_subgroup"/>
    <property type="match status" value="1"/>
</dbReference>
<dbReference type="PRINTS" id="PR00803">
    <property type="entry name" value="AFETOPROTEIN"/>
</dbReference>
<dbReference type="PRINTS" id="PR00802">
    <property type="entry name" value="SERUMALBUMIN"/>
</dbReference>
<dbReference type="SMART" id="SM00103">
    <property type="entry name" value="ALBUMIN"/>
    <property type="match status" value="3"/>
</dbReference>
<dbReference type="SUPFAM" id="SSF48552">
    <property type="entry name" value="Serum albumin-like"/>
    <property type="match status" value="3"/>
</dbReference>
<dbReference type="PROSITE" id="PS00212">
    <property type="entry name" value="ALBUMIN_1"/>
    <property type="match status" value="3"/>
</dbReference>
<dbReference type="PROSITE" id="PS51438">
    <property type="entry name" value="ALBUMIN_2"/>
    <property type="match status" value="3"/>
</dbReference>
<reference key="1">
    <citation type="journal article" date="2009" name="Genome Biol.">
        <title>A whole-genome assembly of the domestic cow, Bos taurus.</title>
        <authorList>
            <person name="Zimin A.V."/>
            <person name="Delcher A.L."/>
            <person name="Florea L."/>
            <person name="Kelley D.R."/>
            <person name="Schatz M.C."/>
            <person name="Puiu D."/>
            <person name="Hanrahan F."/>
            <person name="Pertea G."/>
            <person name="Van Tassell C.P."/>
            <person name="Sonstegard T.S."/>
            <person name="Marcais G."/>
            <person name="Roberts M."/>
            <person name="Subramanian P."/>
            <person name="Yorke J.A."/>
            <person name="Salzberg S.L."/>
        </authorList>
    </citation>
    <scope>NUCLEOTIDE SEQUENCE [LARGE SCALE GENOMIC DNA]</scope>
    <source>
        <strain>Hereford</strain>
    </source>
</reference>
<reference key="2">
    <citation type="journal article" date="2016" name="Elife">
        <title>Active and water-soluble form of lipidated Wnt protein is maintained by a serum glycoprotein afamin/alpha-albumin.</title>
        <authorList>
            <person name="Mihara E."/>
            <person name="Hirai H."/>
            <person name="Yamamoto H."/>
            <person name="Tamura-Kawakami K."/>
            <person name="Matano M."/>
            <person name="Kikuchi A."/>
            <person name="Sato T."/>
            <person name="Takagi J."/>
        </authorList>
    </citation>
    <scope>PROTEIN SEQUENCE OF 22-31</scope>
    <scope>FUNCTION</scope>
    <scope>INTERACTION WITH WNT3A AND WNT5A</scope>
    <scope>SUBCELLULAR LOCATION</scope>
</reference>
<organism evidence="6">
    <name type="scientific">Bos taurus</name>
    <name type="common">Bovine</name>
    <dbReference type="NCBI Taxonomy" id="9913"/>
    <lineage>
        <taxon>Eukaryota</taxon>
        <taxon>Metazoa</taxon>
        <taxon>Chordata</taxon>
        <taxon>Craniata</taxon>
        <taxon>Vertebrata</taxon>
        <taxon>Euteleostomi</taxon>
        <taxon>Mammalia</taxon>
        <taxon>Eutheria</taxon>
        <taxon>Laurasiatheria</taxon>
        <taxon>Artiodactyla</taxon>
        <taxon>Ruminantia</taxon>
        <taxon>Pecora</taxon>
        <taxon>Bovidae</taxon>
        <taxon>Bovinae</taxon>
        <taxon>Bos</taxon>
    </lineage>
</organism>
<proteinExistence type="evidence at protein level"/>
<sequence>MKQLKLTGFVIFFFFLTESLTLPTQPQDVDDVRITQKFIDDNIGYITIIAFAQYIQEASFEEVEMLVKAMTEYRDKCLADRTLPECSKLANEVLLENICAMEGLPQKYNFSHCCHKVDFERRLCFFHNKKADIGLLPPLPTLDPEEKCQTYKNNRESFLNNYVYEVSRRNPFVFAPTLLTVAARFEEMTKTCCEEQEKANCFQTKAEPFIYYLKALSSYQKNACRALMKFGRQILQSINIAILSQKFPKIGFKQLTSLLEDVSSKYDGCCEGDVVQCIRGRSKVMSHICSKQDSISSKIKDCCEKKIPERGECIIYSNKDDRPNDLSLREAKFIESDNVCEKRDADQANFMAEFLYEYSRRHPELSTPELLRIAKVYKDLLKECCNMENPPECYRHAENRFNETTEKSLKIVQRECEHFQNLGKDDLKYHYLINLTKLAPQLSTEELTFLGKEMVMALTTCCTLSEEFACVDNLVDLVLGELCGINENRNINPAVDHCCKTNFAFRRSCFESLEADKTYVPPSTSQGLFTFHADLCQAHNEELQRKKDRFLVNLVKLKPELAGEELWSLLADFTNVVEKCCKAQEPEACFKEESPKLAAKSQAA</sequence>